<sequence>MVLVLAEIITVGDELLTGNTVDSNSAYIAQRLTEKGFWVRRITTVGDDVKEIENAVREAISRKPEVLIISGGLGPTHDDVTMLGVANAIGRKLKLCEDCLERIKEFYEELHRKGLIDDPTLNEARKKMAYLPEGSEPLNNTEGAAPGAYVEYEGVKIFILPGMPREMKAMLESEVLPRLGERKFVQKKFLAEITDESKLAPILEDTIERFKVKIHSSPKGFGKYIGIIIFAEDDEVIGKVIRYIEGKGIKFREGW</sequence>
<organism>
    <name type="scientific">Pyrococcus horikoshii (strain ATCC 700860 / DSM 12428 / JCM 9974 / NBRC 100139 / OT-3)</name>
    <dbReference type="NCBI Taxonomy" id="70601"/>
    <lineage>
        <taxon>Archaea</taxon>
        <taxon>Methanobacteriati</taxon>
        <taxon>Methanobacteriota</taxon>
        <taxon>Thermococci</taxon>
        <taxon>Thermococcales</taxon>
        <taxon>Thermococcaceae</taxon>
        <taxon>Pyrococcus</taxon>
    </lineage>
</organism>
<gene>
    <name type="ordered locus">PH0439</name>
</gene>
<accession>O58186</accession>
<proteinExistence type="inferred from homology"/>
<reference key="1">
    <citation type="journal article" date="1998" name="DNA Res.">
        <title>Complete sequence and gene organization of the genome of a hyper-thermophilic archaebacterium, Pyrococcus horikoshii OT3.</title>
        <authorList>
            <person name="Kawarabayasi Y."/>
            <person name="Sawada M."/>
            <person name="Horikawa H."/>
            <person name="Haikawa Y."/>
            <person name="Hino Y."/>
            <person name="Yamamoto S."/>
            <person name="Sekine M."/>
            <person name="Baba S."/>
            <person name="Kosugi H."/>
            <person name="Hosoyama A."/>
            <person name="Nagai Y."/>
            <person name="Sakai M."/>
            <person name="Ogura K."/>
            <person name="Otsuka R."/>
            <person name="Nakazawa H."/>
            <person name="Takamiya M."/>
            <person name="Ohfuku Y."/>
            <person name="Funahashi T."/>
            <person name="Tanaka T."/>
            <person name="Kudoh Y."/>
            <person name="Yamazaki J."/>
            <person name="Kushida N."/>
            <person name="Oguchi A."/>
            <person name="Aoki K."/>
            <person name="Yoshizawa T."/>
            <person name="Nakamura Y."/>
            <person name="Robb F.T."/>
            <person name="Horikoshi K."/>
            <person name="Masuchi Y."/>
            <person name="Shizuya H."/>
            <person name="Kikuchi H."/>
        </authorList>
    </citation>
    <scope>NUCLEOTIDE SEQUENCE [LARGE SCALE GENOMIC DNA]</scope>
    <source>
        <strain>ATCC 700860 / DSM 12428 / JCM 9974 / NBRC 100139 / OT-3</strain>
    </source>
</reference>
<protein>
    <recommendedName>
        <fullName evidence="1">Protein PH0439</fullName>
    </recommendedName>
</protein>
<name>Y439_PYRHO</name>
<dbReference type="EMBL" id="BA000001">
    <property type="protein sequence ID" value="BAA29525.1"/>
    <property type="molecule type" value="Genomic_DNA"/>
</dbReference>
<dbReference type="PIR" id="H71154">
    <property type="entry name" value="H71154"/>
</dbReference>
<dbReference type="SMR" id="O58186"/>
<dbReference type="STRING" id="70601.gene:9377370"/>
<dbReference type="EnsemblBacteria" id="BAA29525">
    <property type="protein sequence ID" value="BAA29525"/>
    <property type="gene ID" value="BAA29525"/>
</dbReference>
<dbReference type="KEGG" id="pho:PH0439"/>
<dbReference type="eggNOG" id="arCOG00215">
    <property type="taxonomic scope" value="Archaea"/>
</dbReference>
<dbReference type="Proteomes" id="UP000000752">
    <property type="component" value="Chromosome"/>
</dbReference>
<dbReference type="CDD" id="cd00885">
    <property type="entry name" value="cinA"/>
    <property type="match status" value="1"/>
</dbReference>
<dbReference type="Gene3D" id="3.40.980.10">
    <property type="entry name" value="MoaB/Mog-like domain"/>
    <property type="match status" value="1"/>
</dbReference>
<dbReference type="HAMAP" id="MF_00226_A">
    <property type="entry name" value="CinA_A"/>
    <property type="match status" value="1"/>
</dbReference>
<dbReference type="InterPro" id="IPR050101">
    <property type="entry name" value="CinA"/>
</dbReference>
<dbReference type="InterPro" id="IPR023055">
    <property type="entry name" value="CinA_Arc"/>
</dbReference>
<dbReference type="InterPro" id="IPR036425">
    <property type="entry name" value="MoaB/Mog-like_dom_sf"/>
</dbReference>
<dbReference type="InterPro" id="IPR001453">
    <property type="entry name" value="MoaB/Mog_dom"/>
</dbReference>
<dbReference type="NCBIfam" id="TIGR00177">
    <property type="entry name" value="molyb_syn"/>
    <property type="match status" value="1"/>
</dbReference>
<dbReference type="NCBIfam" id="NF002977">
    <property type="entry name" value="PRK03670.1"/>
    <property type="match status" value="1"/>
</dbReference>
<dbReference type="PANTHER" id="PTHR13939">
    <property type="entry name" value="NICOTINAMIDE-NUCLEOTIDE AMIDOHYDROLASE PNCC"/>
    <property type="match status" value="1"/>
</dbReference>
<dbReference type="PANTHER" id="PTHR13939:SF0">
    <property type="entry name" value="NMN AMIDOHYDROLASE-LIKE PROTEIN YFAY"/>
    <property type="match status" value="1"/>
</dbReference>
<dbReference type="Pfam" id="PF00994">
    <property type="entry name" value="MoCF_biosynth"/>
    <property type="match status" value="1"/>
</dbReference>
<dbReference type="SMART" id="SM00852">
    <property type="entry name" value="MoCF_biosynth"/>
    <property type="match status" value="1"/>
</dbReference>
<dbReference type="SUPFAM" id="SSF53218">
    <property type="entry name" value="Molybdenum cofactor biosynthesis proteins"/>
    <property type="match status" value="1"/>
</dbReference>
<comment type="similarity">
    <text evidence="1">Belongs to the CinA family.</text>
</comment>
<evidence type="ECO:0000255" key="1">
    <source>
        <dbReference type="HAMAP-Rule" id="MF_00226"/>
    </source>
</evidence>
<feature type="chain" id="PRO_0000156800" description="Protein PH0439">
    <location>
        <begin position="1"/>
        <end position="255"/>
    </location>
</feature>